<geneLocation type="chloroplast"/>
<accession>P49536</accession>
<proteinExistence type="predicted"/>
<dbReference type="EMBL" id="Z67753">
    <property type="protein sequence ID" value="CAA91704.1"/>
    <property type="molecule type" value="Genomic_DNA"/>
</dbReference>
<dbReference type="PIR" id="S78331">
    <property type="entry name" value="S78331"/>
</dbReference>
<dbReference type="RefSeq" id="NP_043672.1">
    <property type="nucleotide sequence ID" value="NC_001713.1"/>
</dbReference>
<dbReference type="SMR" id="P49536"/>
<dbReference type="GeneID" id="801832"/>
<dbReference type="GO" id="GO:0009507">
    <property type="term" value="C:chloroplast"/>
    <property type="evidence" value="ECO:0007669"/>
    <property type="project" value="UniProtKB-SubCell"/>
</dbReference>
<dbReference type="GO" id="GO:0003677">
    <property type="term" value="F:DNA binding"/>
    <property type="evidence" value="ECO:0007669"/>
    <property type="project" value="UniProtKB-KW"/>
</dbReference>
<dbReference type="Gene3D" id="2.40.50.140">
    <property type="entry name" value="Nucleic acid-binding proteins"/>
    <property type="match status" value="1"/>
</dbReference>
<dbReference type="InterPro" id="IPR012340">
    <property type="entry name" value="NA-bd_OB-fold"/>
</dbReference>
<keyword id="KW-0150">Chloroplast</keyword>
<keyword id="KW-0238">DNA-binding</keyword>
<keyword id="KW-0934">Plastid</keyword>
<sequence>MNYASFIIKIIKKPKQSFFEKEISLTEISGKLYQIRNKKKIEIPVSLSLWGNLAYDTMQYYHINDYVIVEGYVSLRDKISSGYQIPVDKHIEVSGFKIYPFLLDSIQLTKMDK</sequence>
<gene>
    <name type="primary">ycf41</name>
</gene>
<organism>
    <name type="scientific">Trieres chinensis</name>
    <name type="common">Marine centric diatom</name>
    <name type="synonym">Odontella sinensis</name>
    <dbReference type="NCBI Taxonomy" id="1514140"/>
    <lineage>
        <taxon>Eukaryota</taxon>
        <taxon>Sar</taxon>
        <taxon>Stramenopiles</taxon>
        <taxon>Ochrophyta</taxon>
        <taxon>Bacillariophyta</taxon>
        <taxon>Mediophyceae</taxon>
        <taxon>Biddulphiophycidae</taxon>
        <taxon>Eupodiscales</taxon>
        <taxon>Parodontellaceae</taxon>
        <taxon>Trieres</taxon>
    </lineage>
</organism>
<name>YCF41_TRICV</name>
<reference key="1">
    <citation type="journal article" date="1995" name="Plant Mol. Biol. Rep.">
        <title>The chloroplast genome of a chlorophyll a+c-containing alga, Odontella sinensis.</title>
        <authorList>
            <person name="Kowallik K.V."/>
            <person name="Stoebe B."/>
            <person name="Schaffran I."/>
            <person name="Kroth-Pancic P."/>
            <person name="Freier U."/>
        </authorList>
    </citation>
    <scope>NUCLEOTIDE SEQUENCE [LARGE SCALE GENOMIC DNA]</scope>
</reference>
<protein>
    <recommendedName>
        <fullName>Putative single-stranded DNA-binding protein ycf41</fullName>
    </recommendedName>
    <alternativeName>
        <fullName>ORF113</fullName>
    </alternativeName>
</protein>
<feature type="chain" id="PRO_0000217360" description="Putative single-stranded DNA-binding protein ycf41">
    <location>
        <begin position="1"/>
        <end position="113"/>
    </location>
</feature>
<feature type="domain" description="SSB">
    <location>
        <begin position="1"/>
        <end position="101"/>
    </location>
</feature>
<comment type="subcellular location">
    <subcellularLocation>
        <location>Plastid</location>
        <location>Chloroplast</location>
    </subcellularLocation>
</comment>